<keyword id="KW-0067">ATP-binding</keyword>
<keyword id="KW-1184">Jasmonic acid signaling pathway</keyword>
<keyword id="KW-0436">Ligase</keyword>
<keyword id="KW-0547">Nucleotide-binding</keyword>
<keyword id="KW-1185">Reference proteome</keyword>
<keyword id="KW-0346">Stress response</keyword>
<reference key="1">
    <citation type="journal article" date="2002" name="Nature">
        <title>The genome sequence and structure of rice chromosome 1.</title>
        <authorList>
            <person name="Sasaki T."/>
            <person name="Matsumoto T."/>
            <person name="Yamamoto K."/>
            <person name="Sakata K."/>
            <person name="Baba T."/>
            <person name="Katayose Y."/>
            <person name="Wu J."/>
            <person name="Niimura Y."/>
            <person name="Cheng Z."/>
            <person name="Nagamura Y."/>
            <person name="Antonio B.A."/>
            <person name="Kanamori H."/>
            <person name="Hosokawa S."/>
            <person name="Masukawa M."/>
            <person name="Arikawa K."/>
            <person name="Chiden Y."/>
            <person name="Hayashi M."/>
            <person name="Okamoto M."/>
            <person name="Ando T."/>
            <person name="Aoki H."/>
            <person name="Arita K."/>
            <person name="Hamada M."/>
            <person name="Harada C."/>
            <person name="Hijishita S."/>
            <person name="Honda M."/>
            <person name="Ichikawa Y."/>
            <person name="Idonuma A."/>
            <person name="Iijima M."/>
            <person name="Ikeda M."/>
            <person name="Ikeno M."/>
            <person name="Ito S."/>
            <person name="Ito T."/>
            <person name="Ito Y."/>
            <person name="Ito Y."/>
            <person name="Iwabuchi A."/>
            <person name="Kamiya K."/>
            <person name="Karasawa W."/>
            <person name="Katagiri S."/>
            <person name="Kikuta A."/>
            <person name="Kobayashi N."/>
            <person name="Kono I."/>
            <person name="Machita K."/>
            <person name="Maehara T."/>
            <person name="Mizuno H."/>
            <person name="Mizubayashi T."/>
            <person name="Mukai Y."/>
            <person name="Nagasaki H."/>
            <person name="Nakashima M."/>
            <person name="Nakama Y."/>
            <person name="Nakamichi Y."/>
            <person name="Nakamura M."/>
            <person name="Namiki N."/>
            <person name="Negishi M."/>
            <person name="Ohta I."/>
            <person name="Ono N."/>
            <person name="Saji S."/>
            <person name="Sakai K."/>
            <person name="Shibata M."/>
            <person name="Shimokawa T."/>
            <person name="Shomura A."/>
            <person name="Song J."/>
            <person name="Takazaki Y."/>
            <person name="Terasawa K."/>
            <person name="Tsuji K."/>
            <person name="Waki K."/>
            <person name="Yamagata H."/>
            <person name="Yamane H."/>
            <person name="Yoshiki S."/>
            <person name="Yoshihara R."/>
            <person name="Yukawa K."/>
            <person name="Zhong H."/>
            <person name="Iwama H."/>
            <person name="Endo T."/>
            <person name="Ito H."/>
            <person name="Hahn J.H."/>
            <person name="Kim H.-I."/>
            <person name="Eun M.-Y."/>
            <person name="Yano M."/>
            <person name="Jiang J."/>
            <person name="Gojobori T."/>
        </authorList>
    </citation>
    <scope>NUCLEOTIDE SEQUENCE [LARGE SCALE GENOMIC DNA]</scope>
    <source>
        <strain>cv. Nipponbare</strain>
    </source>
</reference>
<reference key="2">
    <citation type="journal article" date="2005" name="Nature">
        <title>The map-based sequence of the rice genome.</title>
        <authorList>
            <consortium name="International rice genome sequencing project (IRGSP)"/>
        </authorList>
    </citation>
    <scope>NUCLEOTIDE SEQUENCE [LARGE SCALE GENOMIC DNA]</scope>
    <source>
        <strain>cv. Nipponbare</strain>
    </source>
</reference>
<reference key="3">
    <citation type="journal article" date="2008" name="Nucleic Acids Res.">
        <title>The rice annotation project database (RAP-DB): 2008 update.</title>
        <authorList>
            <consortium name="The rice annotation project (RAP)"/>
        </authorList>
    </citation>
    <scope>GENOME REANNOTATION</scope>
    <source>
        <strain>cv. Nipponbare</strain>
    </source>
</reference>
<reference key="4">
    <citation type="journal article" date="2013" name="Rice">
        <title>Improvement of the Oryza sativa Nipponbare reference genome using next generation sequence and optical map data.</title>
        <authorList>
            <person name="Kawahara Y."/>
            <person name="de la Bastide M."/>
            <person name="Hamilton J.P."/>
            <person name="Kanamori H."/>
            <person name="McCombie W.R."/>
            <person name="Ouyang S."/>
            <person name="Schwartz D.C."/>
            <person name="Tanaka T."/>
            <person name="Wu J."/>
            <person name="Zhou S."/>
            <person name="Childs K.L."/>
            <person name="Davidson R.M."/>
            <person name="Lin H."/>
            <person name="Quesada-Ocampo L."/>
            <person name="Vaillancourt B."/>
            <person name="Sakai H."/>
            <person name="Lee S.S."/>
            <person name="Kim J."/>
            <person name="Numa H."/>
            <person name="Itoh T."/>
            <person name="Buell C.R."/>
            <person name="Matsumoto T."/>
        </authorList>
    </citation>
    <scope>GENOME REANNOTATION</scope>
    <source>
        <strain>cv. Nipponbare</strain>
    </source>
</reference>
<reference key="5">
    <citation type="journal article" date="2003" name="Science">
        <title>Collection, mapping, and annotation of over 28,000 cDNA clones from japonica rice.</title>
        <authorList>
            <consortium name="The rice full-length cDNA consortium"/>
        </authorList>
    </citation>
    <scope>NUCLEOTIDE SEQUENCE [LARGE SCALE MRNA]</scope>
    <source>
        <strain>cv. Nipponbare</strain>
    </source>
</reference>
<reference key="6">
    <citation type="journal article" date="2006" name="Funct. Integr. Genomics">
        <title>The auxin-responsive GH3 gene family in rice (Oryza sativa).</title>
        <authorList>
            <person name="Jain M."/>
            <person name="Kaur N."/>
            <person name="Tyagi A.K."/>
            <person name="Khurana J.P."/>
        </authorList>
    </citation>
    <scope>TISSUE SPECIFICITY</scope>
    <scope>INDUCTION</scope>
    <scope>NOMENCLATURE</scope>
</reference>
<reference key="7">
    <citation type="journal article" date="2011" name="Biochem. Biophys. Res. Commun.">
        <title>OsJAR1 and OsJAR2 are jasmonyl-L-isoleucine synthases involved in wound- and pathogen-induced jasmonic acid signalling.</title>
        <authorList>
            <person name="Wakuta S."/>
            <person name="Suzuki E."/>
            <person name="Saburi W."/>
            <person name="Matsuura H."/>
            <person name="Nabeta K."/>
            <person name="Imai R."/>
            <person name="Matsui H."/>
        </authorList>
    </citation>
    <scope>FUNCTION</scope>
    <scope>INDUCTION BY WOUNDING</scope>
</reference>
<reference key="8">
    <citation type="journal article" date="2014" name="Plant Cell Environ.">
        <title>Light induces jasmonate-isoleucine conjugation via OsJAR1-dependent and -independent pathways in rice.</title>
        <authorList>
            <person name="Svyatyna K."/>
            <person name="Jikumaru Y."/>
            <person name="Brendel R."/>
            <person name="Reichelt M."/>
            <person name="Mithoefer A."/>
            <person name="Takano M."/>
            <person name="Kamiya Y."/>
            <person name="Nick P."/>
            <person name="Riemann M."/>
        </authorList>
    </citation>
    <scope>FUNCTION</scope>
    <scope>CATALYTIC ACTIVITY</scope>
</reference>
<name>GH33_ORYSJ</name>
<organism>
    <name type="scientific">Oryza sativa subsp. japonica</name>
    <name type="common">Rice</name>
    <dbReference type="NCBI Taxonomy" id="39947"/>
    <lineage>
        <taxon>Eukaryota</taxon>
        <taxon>Viridiplantae</taxon>
        <taxon>Streptophyta</taxon>
        <taxon>Embryophyta</taxon>
        <taxon>Tracheophyta</taxon>
        <taxon>Spermatophyta</taxon>
        <taxon>Magnoliopsida</taxon>
        <taxon>Liliopsida</taxon>
        <taxon>Poales</taxon>
        <taxon>Poaceae</taxon>
        <taxon>BOP clade</taxon>
        <taxon>Oryzoideae</taxon>
        <taxon>Oryzeae</taxon>
        <taxon>Oryzinae</taxon>
        <taxon>Oryza</taxon>
        <taxon>Oryza sativa</taxon>
    </lineage>
</organism>
<dbReference type="EC" id="6.3.2.52" evidence="5"/>
<dbReference type="EMBL" id="AP002094">
    <property type="protein sequence ID" value="BAD81367.1"/>
    <property type="status" value="ALT_SEQ"/>
    <property type="molecule type" value="Genomic_DNA"/>
</dbReference>
<dbReference type="EMBL" id="AP008207">
    <property type="protein sequence ID" value="BAF04344.1"/>
    <property type="molecule type" value="Genomic_DNA"/>
</dbReference>
<dbReference type="EMBL" id="AP014957">
    <property type="protein sequence ID" value="BAS71074.1"/>
    <property type="molecule type" value="Genomic_DNA"/>
</dbReference>
<dbReference type="EMBL" id="AK072125">
    <property type="status" value="NOT_ANNOTATED_CDS"/>
    <property type="molecule type" value="mRNA"/>
</dbReference>
<dbReference type="SMR" id="Q5NAZ7"/>
<dbReference type="FunCoup" id="Q5NAZ7">
    <property type="interactions" value="125"/>
</dbReference>
<dbReference type="STRING" id="39947.Q5NAZ7"/>
<dbReference type="PaxDb" id="39947-Q5NAZ7"/>
<dbReference type="EnsemblPlants" id="Os01t0221100-01">
    <property type="protein sequence ID" value="Os01t0221100-01"/>
    <property type="gene ID" value="Os01g0221100"/>
</dbReference>
<dbReference type="EnsemblPlants" id="Os01t0221100-02">
    <property type="protein sequence ID" value="Os01t0221100-02"/>
    <property type="gene ID" value="Os01g0221100"/>
</dbReference>
<dbReference type="Gramene" id="Os01t0221100-01">
    <property type="protein sequence ID" value="Os01t0221100-01"/>
    <property type="gene ID" value="Os01g0221100"/>
</dbReference>
<dbReference type="Gramene" id="Os01t0221100-02">
    <property type="protein sequence ID" value="Os01t0221100-02"/>
    <property type="gene ID" value="Os01g0221100"/>
</dbReference>
<dbReference type="KEGG" id="dosa:Os01g0221100"/>
<dbReference type="eggNOG" id="ENOG502QTQD">
    <property type="taxonomic scope" value="Eukaryota"/>
</dbReference>
<dbReference type="HOGENOM" id="CLU_016249_0_0_1"/>
<dbReference type="InParanoid" id="Q5NAZ7"/>
<dbReference type="OMA" id="ACCDELD"/>
<dbReference type="PlantReactome" id="R-OSA-6787011">
    <property type="pathway name" value="Jasmonic acid signaling"/>
</dbReference>
<dbReference type="Proteomes" id="UP000000763">
    <property type="component" value="Chromosome 1"/>
</dbReference>
<dbReference type="Proteomes" id="UP000059680">
    <property type="component" value="Chromosome 1"/>
</dbReference>
<dbReference type="GO" id="GO:0005737">
    <property type="term" value="C:cytoplasm"/>
    <property type="evidence" value="ECO:0000318"/>
    <property type="project" value="GO_Central"/>
</dbReference>
<dbReference type="GO" id="GO:0016881">
    <property type="term" value="F:acid-amino acid ligase activity"/>
    <property type="evidence" value="ECO:0000318"/>
    <property type="project" value="GO_Central"/>
</dbReference>
<dbReference type="GO" id="GO:0005524">
    <property type="term" value="F:ATP binding"/>
    <property type="evidence" value="ECO:0007669"/>
    <property type="project" value="UniProtKB-KW"/>
</dbReference>
<dbReference type="GO" id="GO:0080123">
    <property type="term" value="F:jasmonoyl-L-amino acid ligase activity"/>
    <property type="evidence" value="ECO:0000314"/>
    <property type="project" value="UniProtKB"/>
</dbReference>
<dbReference type="GO" id="GO:0009733">
    <property type="term" value="P:response to auxin"/>
    <property type="evidence" value="ECO:0000305"/>
    <property type="project" value="Gramene"/>
</dbReference>
<dbReference type="GO" id="GO:0009416">
    <property type="term" value="P:response to light stimulus"/>
    <property type="evidence" value="ECO:0000305"/>
    <property type="project" value="Gramene"/>
</dbReference>
<dbReference type="InterPro" id="IPR004993">
    <property type="entry name" value="GH3"/>
</dbReference>
<dbReference type="InterPro" id="IPR055377">
    <property type="entry name" value="GH3_M"/>
</dbReference>
<dbReference type="PANTHER" id="PTHR31901">
    <property type="entry name" value="GH3 DOMAIN-CONTAINING PROTEIN"/>
    <property type="match status" value="1"/>
</dbReference>
<dbReference type="PANTHER" id="PTHR31901:SF56">
    <property type="entry name" value="JASMONOYL--L-AMINO ACID SYNTHETASE GH3.3"/>
    <property type="match status" value="1"/>
</dbReference>
<dbReference type="Pfam" id="PF03321">
    <property type="entry name" value="GH3"/>
    <property type="match status" value="1"/>
</dbReference>
<dbReference type="Pfam" id="PF23571">
    <property type="entry name" value="GH3_M"/>
    <property type="match status" value="1"/>
</dbReference>
<comment type="function">
    <text evidence="1 4 5">Catalyzes the synthesis of jasmonate-amino acid conjugates by adenylation. Catalyzes the conjugation of jasmonate (JA) to Ile when expressed in a heterologous system (E.coli) (PubMed:21619871). Catalyzes in vitro the conjugation of jasmonate (JA) to Ile, Phe, Leu, Met, Val and Trp (PubMed:24033451). May catalyze the synthesis of indole-3-acetic acid (IAA)-amino acid conjugates, providing a mechanism for the plant to cope with the presence of excess auxin (By similarity).</text>
</comment>
<comment type="catalytic activity">
    <reaction evidence="5">
        <text>a jasmonate + an L-alpha-amino acid + ATP = a jasmonyl-L-amino acid + AMP + diphosphate + H(+)</text>
        <dbReference type="Rhea" id="RHEA:55772"/>
        <dbReference type="ChEBI" id="CHEBI:15378"/>
        <dbReference type="ChEBI" id="CHEBI:30616"/>
        <dbReference type="ChEBI" id="CHEBI:33019"/>
        <dbReference type="ChEBI" id="CHEBI:59869"/>
        <dbReference type="ChEBI" id="CHEBI:136183"/>
        <dbReference type="ChEBI" id="CHEBI:136184"/>
        <dbReference type="ChEBI" id="CHEBI:456215"/>
        <dbReference type="EC" id="6.3.2.52"/>
    </reaction>
</comment>
<comment type="tissue specificity">
    <text evidence="3">Expressed in green shoots and flowers.</text>
</comment>
<comment type="induction">
    <text evidence="3 4">At low level by auxin. Induced by wounding (PubMed:21619871).</text>
</comment>
<comment type="similarity">
    <text evidence="8">Belongs to the IAA-amido conjugating enzyme family.</text>
</comment>
<comment type="sequence caution" evidence="8">
    <conflict type="erroneous gene model prediction">
        <sequence resource="EMBL-CDS" id="BAD81367"/>
    </conflict>
</comment>
<feature type="chain" id="PRO_0000203580" description="Jasmonoyl--L-amino acid synthetase GH3.3">
    <location>
        <begin position="1"/>
        <end position="462"/>
    </location>
</feature>
<feature type="binding site" evidence="2">
    <location>
        <position position="103"/>
    </location>
    <ligand>
        <name>ATP</name>
        <dbReference type="ChEBI" id="CHEBI:30616"/>
    </ligand>
</feature>
<feature type="binding site" evidence="2">
    <location>
        <position position="106"/>
    </location>
    <ligand>
        <name>jasmonate</name>
        <dbReference type="ChEBI" id="CHEBI:58431"/>
    </ligand>
</feature>
<feature type="binding site" evidence="2">
    <location>
        <position position="126"/>
    </location>
    <ligand>
        <name>ATP</name>
        <dbReference type="ChEBI" id="CHEBI:30616"/>
    </ligand>
</feature>
<feature type="binding site" evidence="2">
    <location>
        <begin position="170"/>
        <end position="174"/>
    </location>
    <ligand>
        <name>an L-alpha-amino acid</name>
        <dbReference type="ChEBI" id="CHEBI:59869"/>
    </ligand>
</feature>
<feature type="binding site" evidence="2">
    <location>
        <position position="172"/>
    </location>
    <ligand>
        <name>ATP</name>
        <dbReference type="ChEBI" id="CHEBI:30616"/>
    </ligand>
</feature>
<feature type="binding site" evidence="2">
    <location>
        <begin position="334"/>
        <end position="337"/>
    </location>
    <ligand>
        <name>jasmonate</name>
        <dbReference type="ChEBI" id="CHEBI:58431"/>
    </ligand>
</feature>
<feature type="binding site" evidence="2">
    <location>
        <begin position="337"/>
        <end position="342"/>
    </location>
    <ligand>
        <name>ATP</name>
        <dbReference type="ChEBI" id="CHEBI:30616"/>
    </ligand>
</feature>
<feature type="binding site" evidence="2">
    <location>
        <position position="339"/>
    </location>
    <ligand>
        <name>jasmonate</name>
        <dbReference type="ChEBI" id="CHEBI:58431"/>
    </ligand>
</feature>
<feature type="sequence conflict" description="In Ref. 5; AK072125." evidence="8" ref="5">
    <original>P</original>
    <variation>H</variation>
    <location>
        <position position="362"/>
    </location>
</feature>
<gene>
    <name evidence="6" type="primary">GH3.3</name>
    <name evidence="7" type="synonym">JAR2</name>
    <name evidence="10" type="ordered locus">Os01g0221100</name>
    <name evidence="8" type="ordered locus">LOC_Os01g12160</name>
    <name evidence="9" type="ORF">P0483F08.33-1</name>
</gene>
<accession>Q5NAZ7</accession>
<accession>A0A0P0UZZ7</accession>
<accession>Q0JPI4</accession>
<evidence type="ECO:0000250" key="1">
    <source>
        <dbReference type="UniProtKB" id="O82333"/>
    </source>
</evidence>
<evidence type="ECO:0000250" key="2">
    <source>
        <dbReference type="UniProtKB" id="Q9SKE2"/>
    </source>
</evidence>
<evidence type="ECO:0000269" key="3">
    <source>
    </source>
</evidence>
<evidence type="ECO:0000269" key="4">
    <source>
    </source>
</evidence>
<evidence type="ECO:0000269" key="5">
    <source>
    </source>
</evidence>
<evidence type="ECO:0000303" key="6">
    <source>
    </source>
</evidence>
<evidence type="ECO:0000303" key="7">
    <source>
    </source>
</evidence>
<evidence type="ECO:0000305" key="8"/>
<evidence type="ECO:0000312" key="9">
    <source>
        <dbReference type="EMBL" id="BAD81367.1"/>
    </source>
</evidence>
<evidence type="ECO:0000312" key="10">
    <source>
        <dbReference type="EMBL" id="BAF04344.1"/>
    </source>
</evidence>
<proteinExistence type="evidence at protein level"/>
<protein>
    <recommendedName>
        <fullName evidence="8">Jasmonoyl--L-amino acid synthetase GH3.3</fullName>
        <ecNumber evidence="5">6.3.2.52</ecNumber>
    </recommendedName>
    <alternativeName>
        <fullName evidence="6">Auxin-responsive GH3-like protein 3</fullName>
        <shortName evidence="6">OsGH3-3</shortName>
    </alternativeName>
    <alternativeName>
        <fullName evidence="8">Indole-3-acetic acid-amido synthetase GH3.3</fullName>
    </alternativeName>
    <alternativeName>
        <fullName evidence="8">Jasmonate-amino acid synthetase JAR2</fullName>
    </alternativeName>
    <alternativeName>
        <fullName evidence="8">Jasmonic acid-amido synthetase JAR2</fullName>
    </alternativeName>
    <alternativeName>
        <fullName evidence="7">Protein JASMONATE RESISTANT 2</fullName>
        <shortName evidence="7">OsJAR2</shortName>
    </alternativeName>
</protein>
<sequence>MLEKKATRSTRVDGVSGEAVIEEFERVTRDAANVQRETLRRILAENGGVEYLRGLGLAGATDPATFRARVPLATHADLEPYIDRIADGDASPVLTAKPATSISLSSGTTQGKRKYLLFNEELVKSTMQIYRISYAFRNREFPVENGKALQFIYSSRETRTKGGLTATTATTNVYRSEEFKATMRDIQSQCCSPDEVIFGPDFAQSLYCHLLAGLLAAGDVQIVSATFAHSVVLAFQTFERAWEDLCADIRRGEVSPSRVTSPAVRRAMAALLAAPNPGLADEVARKCAALSNWYGVIPALWPNARYVYGIMTGSMEHYVKKLRHYAGGLPLVAAEYGASEGWVGANVEPGTPPERATFTVLPDIAYFEFIPLKPVAGDGGYAEAEPVGLTEVAAGELYEVVMTTFAGNTRSSSSCMTLVAYYYLQSKKWMNICRFCISVHETSRNLVTCTFAATGHIMFAQK</sequence>